<proteinExistence type="inferred from homology"/>
<keyword id="KW-0169">Cobalamin biosynthesis</keyword>
<keyword id="KW-0328">Glycosyltransferase</keyword>
<keyword id="KW-1185">Reference proteome</keyword>
<keyword id="KW-0808">Transferase</keyword>
<protein>
    <recommendedName>
        <fullName evidence="1">Nicotinate-nucleotide--dimethylbenzimidazole phosphoribosyltransferase</fullName>
        <shortName evidence="1">NN:DBI PRT</shortName>
        <ecNumber evidence="1">2.4.2.21</ecNumber>
    </recommendedName>
    <alternativeName>
        <fullName evidence="1">N(1)-alpha-phosphoribosyltransferase</fullName>
    </alternativeName>
</protein>
<evidence type="ECO:0000255" key="1">
    <source>
        <dbReference type="HAMAP-Rule" id="MF_00230"/>
    </source>
</evidence>
<gene>
    <name evidence="1" type="primary">cobT</name>
    <name type="synonym">cobU</name>
    <name type="ordered locus">R01884</name>
    <name type="ORF">SMc04214</name>
</gene>
<sequence>MSASGLPFDDFRELLRNLPGPDTAALVAARERDGQLTKPPGALGRLEEIAFWLAAWTGRPPAVNRPLVAIFAGNHGVTRQGVTPFPASVTAQMVENFAAGGAAINQICVAHDLGLKVFDLALDYPTGDITEEPALSERDCAATMAFGMEAIAGGTDLLCIGEMGIGNTTIAAAINLGLYGGTAEEWVGPGTGSEGEVLMRKIAAVEKAVALHRDHLSDPLEVMRRLGGREIAAMAGAILAARMQKVPVIIDGYVATAAAAILKAANPAALDHCLIGHVSSEPGHMRAIEKLGKTPLLALGMRLGEGTGAALAAGIVKAAAACHSGMATFAQAGVSNKE</sequence>
<name>COBT_RHIME</name>
<comment type="function">
    <text evidence="1">Catalyzes the synthesis of alpha-ribazole-5'-phosphate from nicotinate mononucleotide (NAMN) and 5,6-dimethylbenzimidazole (DMB).</text>
</comment>
<comment type="catalytic activity">
    <reaction evidence="1">
        <text>5,6-dimethylbenzimidazole + nicotinate beta-D-ribonucleotide = alpha-ribazole 5'-phosphate + nicotinate + H(+)</text>
        <dbReference type="Rhea" id="RHEA:11196"/>
        <dbReference type="ChEBI" id="CHEBI:15378"/>
        <dbReference type="ChEBI" id="CHEBI:15890"/>
        <dbReference type="ChEBI" id="CHEBI:32544"/>
        <dbReference type="ChEBI" id="CHEBI:57502"/>
        <dbReference type="ChEBI" id="CHEBI:57918"/>
        <dbReference type="EC" id="2.4.2.21"/>
    </reaction>
</comment>
<comment type="pathway">
    <text evidence="1">Nucleoside biosynthesis; alpha-ribazole biosynthesis; alpha-ribazole from 5,6-dimethylbenzimidazole: step 1/2.</text>
</comment>
<comment type="similarity">
    <text evidence="1">Belongs to the CobT family.</text>
</comment>
<organism>
    <name type="scientific">Rhizobium meliloti (strain 1021)</name>
    <name type="common">Ensifer meliloti</name>
    <name type="synonym">Sinorhizobium meliloti</name>
    <dbReference type="NCBI Taxonomy" id="266834"/>
    <lineage>
        <taxon>Bacteria</taxon>
        <taxon>Pseudomonadati</taxon>
        <taxon>Pseudomonadota</taxon>
        <taxon>Alphaproteobacteria</taxon>
        <taxon>Hyphomicrobiales</taxon>
        <taxon>Rhizobiaceae</taxon>
        <taxon>Sinorhizobium/Ensifer group</taxon>
        <taxon>Sinorhizobium</taxon>
    </lineage>
</organism>
<dbReference type="EC" id="2.4.2.21" evidence="1"/>
<dbReference type="EMBL" id="AL591688">
    <property type="protein sequence ID" value="CAC46463.1"/>
    <property type="molecule type" value="Genomic_DNA"/>
</dbReference>
<dbReference type="RefSeq" id="NP_385990.1">
    <property type="nucleotide sequence ID" value="NC_003047.1"/>
</dbReference>
<dbReference type="RefSeq" id="WP_003535313.1">
    <property type="nucleotide sequence ID" value="NC_003047.1"/>
</dbReference>
<dbReference type="SMR" id="Q92P98"/>
<dbReference type="EnsemblBacteria" id="CAC46463">
    <property type="protein sequence ID" value="CAC46463"/>
    <property type="gene ID" value="SMc04214"/>
</dbReference>
<dbReference type="GeneID" id="89576219"/>
<dbReference type="KEGG" id="sme:SMc04214"/>
<dbReference type="PATRIC" id="fig|266834.11.peg.3327"/>
<dbReference type="eggNOG" id="COG2038">
    <property type="taxonomic scope" value="Bacteria"/>
</dbReference>
<dbReference type="HOGENOM" id="CLU_002982_0_1_5"/>
<dbReference type="OrthoDB" id="9781491at2"/>
<dbReference type="UniPathway" id="UPA00061">
    <property type="reaction ID" value="UER00516"/>
</dbReference>
<dbReference type="Proteomes" id="UP000001976">
    <property type="component" value="Chromosome"/>
</dbReference>
<dbReference type="GO" id="GO:0008939">
    <property type="term" value="F:nicotinate-nucleotide-dimethylbenzimidazole phosphoribosyltransferase activity"/>
    <property type="evidence" value="ECO:0007669"/>
    <property type="project" value="UniProtKB-UniRule"/>
</dbReference>
<dbReference type="GO" id="GO:0009236">
    <property type="term" value="P:cobalamin biosynthetic process"/>
    <property type="evidence" value="ECO:0007669"/>
    <property type="project" value="UniProtKB-KW"/>
</dbReference>
<dbReference type="CDD" id="cd02439">
    <property type="entry name" value="DMB-PRT_CobT"/>
    <property type="match status" value="1"/>
</dbReference>
<dbReference type="Gene3D" id="1.10.1610.10">
    <property type="match status" value="1"/>
</dbReference>
<dbReference type="Gene3D" id="3.40.50.10210">
    <property type="match status" value="1"/>
</dbReference>
<dbReference type="HAMAP" id="MF_00230">
    <property type="entry name" value="CobT"/>
    <property type="match status" value="1"/>
</dbReference>
<dbReference type="InterPro" id="IPR003200">
    <property type="entry name" value="Nict_dMeBzImd_PRibTrfase"/>
</dbReference>
<dbReference type="InterPro" id="IPR017846">
    <property type="entry name" value="Nict_dMeBzImd_PRibTrfase_bact"/>
</dbReference>
<dbReference type="InterPro" id="IPR023195">
    <property type="entry name" value="Nict_dMeBzImd_PRibTrfase_N"/>
</dbReference>
<dbReference type="InterPro" id="IPR036087">
    <property type="entry name" value="Nict_dMeBzImd_PRibTrfase_sf"/>
</dbReference>
<dbReference type="NCBIfam" id="TIGR03160">
    <property type="entry name" value="cobT_DBIPRT"/>
    <property type="match status" value="1"/>
</dbReference>
<dbReference type="NCBIfam" id="NF000996">
    <property type="entry name" value="PRK00105.1"/>
    <property type="match status" value="1"/>
</dbReference>
<dbReference type="PANTHER" id="PTHR43463">
    <property type="entry name" value="NICOTINATE-NUCLEOTIDE--DIMETHYLBENZIMIDAZOLE PHOSPHORIBOSYLTRANSFERASE"/>
    <property type="match status" value="1"/>
</dbReference>
<dbReference type="PANTHER" id="PTHR43463:SF1">
    <property type="entry name" value="NICOTINATE-NUCLEOTIDE--DIMETHYLBENZIMIDAZOLE PHOSPHORIBOSYLTRANSFERASE"/>
    <property type="match status" value="1"/>
</dbReference>
<dbReference type="Pfam" id="PF02277">
    <property type="entry name" value="DBI_PRT"/>
    <property type="match status" value="1"/>
</dbReference>
<dbReference type="SUPFAM" id="SSF52733">
    <property type="entry name" value="Nicotinate mononucleotide:5,6-dimethylbenzimidazole phosphoribosyltransferase (CobT)"/>
    <property type="match status" value="1"/>
</dbReference>
<reference key="1">
    <citation type="journal article" date="2001" name="Proc. Natl. Acad. Sci. U.S.A.">
        <title>Analysis of the chromosome sequence of the legume symbiont Sinorhizobium meliloti strain 1021.</title>
        <authorList>
            <person name="Capela D."/>
            <person name="Barloy-Hubler F."/>
            <person name="Gouzy J."/>
            <person name="Bothe G."/>
            <person name="Ampe F."/>
            <person name="Batut J."/>
            <person name="Boistard P."/>
            <person name="Becker A."/>
            <person name="Boutry M."/>
            <person name="Cadieu E."/>
            <person name="Dreano S."/>
            <person name="Gloux S."/>
            <person name="Godrie T."/>
            <person name="Goffeau A."/>
            <person name="Kahn D."/>
            <person name="Kiss E."/>
            <person name="Lelaure V."/>
            <person name="Masuy D."/>
            <person name="Pohl T."/>
            <person name="Portetelle D."/>
            <person name="Puehler A."/>
            <person name="Purnelle B."/>
            <person name="Ramsperger U."/>
            <person name="Renard C."/>
            <person name="Thebault P."/>
            <person name="Vandenbol M."/>
            <person name="Weidner S."/>
            <person name="Galibert F."/>
        </authorList>
    </citation>
    <scope>NUCLEOTIDE SEQUENCE [LARGE SCALE GENOMIC DNA]</scope>
    <source>
        <strain>1021</strain>
    </source>
</reference>
<reference key="2">
    <citation type="journal article" date="2001" name="Science">
        <title>The composite genome of the legume symbiont Sinorhizobium meliloti.</title>
        <authorList>
            <person name="Galibert F."/>
            <person name="Finan T.M."/>
            <person name="Long S.R."/>
            <person name="Puehler A."/>
            <person name="Abola P."/>
            <person name="Ampe F."/>
            <person name="Barloy-Hubler F."/>
            <person name="Barnett M.J."/>
            <person name="Becker A."/>
            <person name="Boistard P."/>
            <person name="Bothe G."/>
            <person name="Boutry M."/>
            <person name="Bowser L."/>
            <person name="Buhrmester J."/>
            <person name="Cadieu E."/>
            <person name="Capela D."/>
            <person name="Chain P."/>
            <person name="Cowie A."/>
            <person name="Davis R.W."/>
            <person name="Dreano S."/>
            <person name="Federspiel N.A."/>
            <person name="Fisher R.F."/>
            <person name="Gloux S."/>
            <person name="Godrie T."/>
            <person name="Goffeau A."/>
            <person name="Golding B."/>
            <person name="Gouzy J."/>
            <person name="Gurjal M."/>
            <person name="Hernandez-Lucas I."/>
            <person name="Hong A."/>
            <person name="Huizar L."/>
            <person name="Hyman R.W."/>
            <person name="Jones T."/>
            <person name="Kahn D."/>
            <person name="Kahn M.L."/>
            <person name="Kalman S."/>
            <person name="Keating D.H."/>
            <person name="Kiss E."/>
            <person name="Komp C."/>
            <person name="Lelaure V."/>
            <person name="Masuy D."/>
            <person name="Palm C."/>
            <person name="Peck M.C."/>
            <person name="Pohl T.M."/>
            <person name="Portetelle D."/>
            <person name="Purnelle B."/>
            <person name="Ramsperger U."/>
            <person name="Surzycki R."/>
            <person name="Thebault P."/>
            <person name="Vandenbol M."/>
            <person name="Vorhoelter F.J."/>
            <person name="Weidner S."/>
            <person name="Wells D.H."/>
            <person name="Wong K."/>
            <person name="Yeh K.-C."/>
            <person name="Batut J."/>
        </authorList>
    </citation>
    <scope>NUCLEOTIDE SEQUENCE [LARGE SCALE GENOMIC DNA]</scope>
    <source>
        <strain>1021</strain>
    </source>
</reference>
<feature type="chain" id="PRO_0000167066" description="Nicotinate-nucleotide--dimethylbenzimidazole phosphoribosyltransferase">
    <location>
        <begin position="1"/>
        <end position="338"/>
    </location>
</feature>
<feature type="active site" description="Proton acceptor" evidence="1">
    <location>
        <position position="305"/>
    </location>
</feature>
<accession>Q92P98</accession>